<organism>
    <name type="scientific">Campylobacter jejuni subsp. jejuni serotype O:6 (strain 81116 / NCTC 11828)</name>
    <dbReference type="NCBI Taxonomy" id="407148"/>
    <lineage>
        <taxon>Bacteria</taxon>
        <taxon>Pseudomonadati</taxon>
        <taxon>Campylobacterota</taxon>
        <taxon>Epsilonproteobacteria</taxon>
        <taxon>Campylobacterales</taxon>
        <taxon>Campylobacteraceae</taxon>
        <taxon>Campylobacter</taxon>
    </lineage>
</organism>
<keyword id="KW-0414">Isoprene biosynthesis</keyword>
<keyword id="KW-0460">Magnesium</keyword>
<keyword id="KW-0479">Metal-binding</keyword>
<keyword id="KW-0784">Thiamine biosynthesis</keyword>
<keyword id="KW-0786">Thiamine pyrophosphate</keyword>
<keyword id="KW-0808">Transferase</keyword>
<protein>
    <recommendedName>
        <fullName evidence="1">1-deoxy-D-xylulose-5-phosphate synthase</fullName>
        <ecNumber evidence="1">2.2.1.7</ecNumber>
    </recommendedName>
    <alternativeName>
        <fullName evidence="1">1-deoxyxylulose-5-phosphate synthase</fullName>
        <shortName evidence="1">DXP synthase</shortName>
        <shortName evidence="1">DXPS</shortName>
    </alternativeName>
</protein>
<sequence length="615" mass="68305">MSKKFAHTQEELEKLSLKELENLAASMREKIIQVVSKNGGHLSSNLGAVELSIAMHLVFDAKKDPFIFDVSHQSYTHKLLSGKEEIFDTLRQINGLSGYTKPSEGDYFVAGHSSTSISLAVGACKAIALKGEKRIPVALIGDGALSAGMAYEALNELGDSKFACVILLNDNEMSISKPIGAISKYLSQAMATQFYQSFKKRIAKMLDILPDSATYMAKRFEESFKLITPGLLFEELGLEYIGPIDGHNLGEIISALKQAKAMQKPCVIHAQTIKGKGYALAEGKHAKWHGVGAFDIDSGESVKKSDAKKSATEIFSKNLLDLASKYENIVGVTAAMPSGTGLDKLIEKYPNRFWDVAIAEQHAVTSMAAMAKEGFKPFIAIYSTFLQRAYDQVIHDCAIMNLNVVFAMDRAGIVGEDGETHQGVFDLSFLAPLPNFTLLAPRDEQMMQNIMEYAYLHQGPIAFRYPRGSFILDKEFNPCEIKLGKAQWLVKNNSEIAFLGYGQGVAKAWQVLRALQEMNNNANLIDLIFAKPLDEELLCELAKKSKIWFIFSENVKIGGIESLINNFLQKYDLHVKVVSFEYEDKFIEHGKTSEVEKNLEKDVNSLLTKVLKFYH</sequence>
<name>DXS_CAMJ8</name>
<reference key="1">
    <citation type="journal article" date="2007" name="J. Bacteriol.">
        <title>The complete genome sequence of Campylobacter jejuni strain 81116 (NCTC11828).</title>
        <authorList>
            <person name="Pearson B.M."/>
            <person name="Gaskin D.J.H."/>
            <person name="Segers R.P.A.M."/>
            <person name="Wells J.M."/>
            <person name="Nuijten P.J.M."/>
            <person name="van Vliet A.H.M."/>
        </authorList>
    </citation>
    <scope>NUCLEOTIDE SEQUENCE [LARGE SCALE GENOMIC DNA]</scope>
    <source>
        <strain>81116 / NCTC 11828</strain>
    </source>
</reference>
<gene>
    <name evidence="1" type="primary">dxs</name>
    <name type="ordered locus">C8J_0298</name>
</gene>
<accession>A8FKB0</accession>
<proteinExistence type="inferred from homology"/>
<comment type="function">
    <text evidence="1">Catalyzes the acyloin condensation reaction between C atoms 2 and 3 of pyruvate and glyceraldehyde 3-phosphate to yield 1-deoxy-D-xylulose-5-phosphate (DXP).</text>
</comment>
<comment type="catalytic activity">
    <reaction evidence="1">
        <text>D-glyceraldehyde 3-phosphate + pyruvate + H(+) = 1-deoxy-D-xylulose 5-phosphate + CO2</text>
        <dbReference type="Rhea" id="RHEA:12605"/>
        <dbReference type="ChEBI" id="CHEBI:15361"/>
        <dbReference type="ChEBI" id="CHEBI:15378"/>
        <dbReference type="ChEBI" id="CHEBI:16526"/>
        <dbReference type="ChEBI" id="CHEBI:57792"/>
        <dbReference type="ChEBI" id="CHEBI:59776"/>
        <dbReference type="EC" id="2.2.1.7"/>
    </reaction>
</comment>
<comment type="cofactor">
    <cofactor evidence="1">
        <name>Mg(2+)</name>
        <dbReference type="ChEBI" id="CHEBI:18420"/>
    </cofactor>
    <text evidence="1">Binds 1 Mg(2+) ion per subunit.</text>
</comment>
<comment type="cofactor">
    <cofactor evidence="1">
        <name>thiamine diphosphate</name>
        <dbReference type="ChEBI" id="CHEBI:58937"/>
    </cofactor>
    <text evidence="1">Binds 1 thiamine pyrophosphate per subunit.</text>
</comment>
<comment type="pathway">
    <text evidence="1">Metabolic intermediate biosynthesis; 1-deoxy-D-xylulose 5-phosphate biosynthesis; 1-deoxy-D-xylulose 5-phosphate from D-glyceraldehyde 3-phosphate and pyruvate: step 1/1.</text>
</comment>
<comment type="subunit">
    <text evidence="1">Homodimer.</text>
</comment>
<comment type="similarity">
    <text evidence="1">Belongs to the transketolase family. DXPS subfamily.</text>
</comment>
<evidence type="ECO:0000255" key="1">
    <source>
        <dbReference type="HAMAP-Rule" id="MF_00315"/>
    </source>
</evidence>
<feature type="chain" id="PRO_1000071995" description="1-deoxy-D-xylulose-5-phosphate synthase">
    <location>
        <begin position="1"/>
        <end position="615"/>
    </location>
</feature>
<feature type="binding site" evidence="1">
    <location>
        <position position="72"/>
    </location>
    <ligand>
        <name>thiamine diphosphate</name>
        <dbReference type="ChEBI" id="CHEBI:58937"/>
    </ligand>
</feature>
<feature type="binding site" evidence="1">
    <location>
        <begin position="111"/>
        <end position="113"/>
    </location>
    <ligand>
        <name>thiamine diphosphate</name>
        <dbReference type="ChEBI" id="CHEBI:58937"/>
    </ligand>
</feature>
<feature type="binding site" evidence="1">
    <location>
        <position position="142"/>
    </location>
    <ligand>
        <name>Mg(2+)</name>
        <dbReference type="ChEBI" id="CHEBI:18420"/>
    </ligand>
</feature>
<feature type="binding site" evidence="1">
    <location>
        <begin position="143"/>
        <end position="144"/>
    </location>
    <ligand>
        <name>thiamine diphosphate</name>
        <dbReference type="ChEBI" id="CHEBI:58937"/>
    </ligand>
</feature>
<feature type="binding site" evidence="1">
    <location>
        <position position="171"/>
    </location>
    <ligand>
        <name>Mg(2+)</name>
        <dbReference type="ChEBI" id="CHEBI:18420"/>
    </ligand>
</feature>
<feature type="binding site" evidence="1">
    <location>
        <position position="171"/>
    </location>
    <ligand>
        <name>thiamine diphosphate</name>
        <dbReference type="ChEBI" id="CHEBI:58937"/>
    </ligand>
</feature>
<feature type="binding site" evidence="1">
    <location>
        <position position="278"/>
    </location>
    <ligand>
        <name>thiamine diphosphate</name>
        <dbReference type="ChEBI" id="CHEBI:58937"/>
    </ligand>
</feature>
<feature type="binding site" evidence="1">
    <location>
        <position position="360"/>
    </location>
    <ligand>
        <name>thiamine diphosphate</name>
        <dbReference type="ChEBI" id="CHEBI:58937"/>
    </ligand>
</feature>
<dbReference type="EC" id="2.2.1.7" evidence="1"/>
<dbReference type="EMBL" id="CP000814">
    <property type="protein sequence ID" value="ABV51897.1"/>
    <property type="molecule type" value="Genomic_DNA"/>
</dbReference>
<dbReference type="RefSeq" id="WP_002866660.1">
    <property type="nucleotide sequence ID" value="NC_009839.1"/>
</dbReference>
<dbReference type="SMR" id="A8FKB0"/>
<dbReference type="KEGG" id="cju:C8J_0298"/>
<dbReference type="HOGENOM" id="CLU_009227_1_4_7"/>
<dbReference type="UniPathway" id="UPA00064">
    <property type="reaction ID" value="UER00091"/>
</dbReference>
<dbReference type="GO" id="GO:0005829">
    <property type="term" value="C:cytosol"/>
    <property type="evidence" value="ECO:0007669"/>
    <property type="project" value="TreeGrafter"/>
</dbReference>
<dbReference type="GO" id="GO:0008661">
    <property type="term" value="F:1-deoxy-D-xylulose-5-phosphate synthase activity"/>
    <property type="evidence" value="ECO:0007669"/>
    <property type="project" value="UniProtKB-UniRule"/>
</dbReference>
<dbReference type="GO" id="GO:0000287">
    <property type="term" value="F:magnesium ion binding"/>
    <property type="evidence" value="ECO:0007669"/>
    <property type="project" value="UniProtKB-UniRule"/>
</dbReference>
<dbReference type="GO" id="GO:0030976">
    <property type="term" value="F:thiamine pyrophosphate binding"/>
    <property type="evidence" value="ECO:0007669"/>
    <property type="project" value="UniProtKB-UniRule"/>
</dbReference>
<dbReference type="GO" id="GO:0052865">
    <property type="term" value="P:1-deoxy-D-xylulose 5-phosphate biosynthetic process"/>
    <property type="evidence" value="ECO:0007669"/>
    <property type="project" value="UniProtKB-UniPathway"/>
</dbReference>
<dbReference type="GO" id="GO:0019288">
    <property type="term" value="P:isopentenyl diphosphate biosynthetic process, methylerythritol 4-phosphate pathway"/>
    <property type="evidence" value="ECO:0007669"/>
    <property type="project" value="TreeGrafter"/>
</dbReference>
<dbReference type="GO" id="GO:0016114">
    <property type="term" value="P:terpenoid biosynthetic process"/>
    <property type="evidence" value="ECO:0007669"/>
    <property type="project" value="UniProtKB-UniRule"/>
</dbReference>
<dbReference type="GO" id="GO:0009228">
    <property type="term" value="P:thiamine biosynthetic process"/>
    <property type="evidence" value="ECO:0007669"/>
    <property type="project" value="UniProtKB-UniRule"/>
</dbReference>
<dbReference type="CDD" id="cd02007">
    <property type="entry name" value="TPP_DXS"/>
    <property type="match status" value="1"/>
</dbReference>
<dbReference type="CDD" id="cd07033">
    <property type="entry name" value="TPP_PYR_DXS_TK_like"/>
    <property type="match status" value="1"/>
</dbReference>
<dbReference type="Gene3D" id="3.40.50.920">
    <property type="match status" value="1"/>
</dbReference>
<dbReference type="Gene3D" id="3.40.50.970">
    <property type="match status" value="2"/>
</dbReference>
<dbReference type="HAMAP" id="MF_00315">
    <property type="entry name" value="DXP_synth"/>
    <property type="match status" value="1"/>
</dbReference>
<dbReference type="InterPro" id="IPR005477">
    <property type="entry name" value="Dxylulose-5-P_synthase"/>
</dbReference>
<dbReference type="InterPro" id="IPR029061">
    <property type="entry name" value="THDP-binding"/>
</dbReference>
<dbReference type="InterPro" id="IPR009014">
    <property type="entry name" value="Transketo_C/PFOR_II"/>
</dbReference>
<dbReference type="InterPro" id="IPR005475">
    <property type="entry name" value="Transketolase-like_Pyr-bd"/>
</dbReference>
<dbReference type="InterPro" id="IPR020826">
    <property type="entry name" value="Transketolase_BS"/>
</dbReference>
<dbReference type="InterPro" id="IPR033248">
    <property type="entry name" value="Transketolase_C"/>
</dbReference>
<dbReference type="InterPro" id="IPR049557">
    <property type="entry name" value="Transketolase_CS"/>
</dbReference>
<dbReference type="NCBIfam" id="TIGR00204">
    <property type="entry name" value="dxs"/>
    <property type="match status" value="1"/>
</dbReference>
<dbReference type="NCBIfam" id="NF003933">
    <property type="entry name" value="PRK05444.2-2"/>
    <property type="match status" value="1"/>
</dbReference>
<dbReference type="PANTHER" id="PTHR43322">
    <property type="entry name" value="1-D-DEOXYXYLULOSE 5-PHOSPHATE SYNTHASE-RELATED"/>
    <property type="match status" value="1"/>
</dbReference>
<dbReference type="PANTHER" id="PTHR43322:SF5">
    <property type="entry name" value="1-DEOXY-D-XYLULOSE-5-PHOSPHATE SYNTHASE, CHLOROPLASTIC"/>
    <property type="match status" value="1"/>
</dbReference>
<dbReference type="Pfam" id="PF13292">
    <property type="entry name" value="DXP_synthase_N"/>
    <property type="match status" value="1"/>
</dbReference>
<dbReference type="Pfam" id="PF02779">
    <property type="entry name" value="Transket_pyr"/>
    <property type="match status" value="1"/>
</dbReference>
<dbReference type="Pfam" id="PF02780">
    <property type="entry name" value="Transketolase_C"/>
    <property type="match status" value="1"/>
</dbReference>
<dbReference type="SMART" id="SM00861">
    <property type="entry name" value="Transket_pyr"/>
    <property type="match status" value="1"/>
</dbReference>
<dbReference type="SUPFAM" id="SSF52518">
    <property type="entry name" value="Thiamin diphosphate-binding fold (THDP-binding)"/>
    <property type="match status" value="2"/>
</dbReference>
<dbReference type="SUPFAM" id="SSF52922">
    <property type="entry name" value="TK C-terminal domain-like"/>
    <property type="match status" value="1"/>
</dbReference>
<dbReference type="PROSITE" id="PS00801">
    <property type="entry name" value="TRANSKETOLASE_1"/>
    <property type="match status" value="1"/>
</dbReference>
<dbReference type="PROSITE" id="PS00802">
    <property type="entry name" value="TRANSKETOLASE_2"/>
    <property type="match status" value="1"/>
</dbReference>